<organism>
    <name type="scientific">Staphylococcus epidermidis (strain ATCC 35984 / DSM 28319 / BCRC 17069 / CCUG 31568 / BM 3577 / RP62A)</name>
    <dbReference type="NCBI Taxonomy" id="176279"/>
    <lineage>
        <taxon>Bacteria</taxon>
        <taxon>Bacillati</taxon>
        <taxon>Bacillota</taxon>
        <taxon>Bacilli</taxon>
        <taxon>Bacillales</taxon>
        <taxon>Staphylococcaceae</taxon>
        <taxon>Staphylococcus</taxon>
    </lineage>
</organism>
<name>YIDC1_STAEQ</name>
<feature type="signal peptide" evidence="1">
    <location>
        <begin position="1"/>
        <end position="18"/>
    </location>
</feature>
<feature type="chain" id="PRO_0000042935" description="Membrane protein insertase YidC 1">
    <location>
        <begin position="19"/>
        <end position="278"/>
    </location>
</feature>
<feature type="transmembrane region" description="Helical" evidence="1">
    <location>
        <begin position="55"/>
        <end position="75"/>
    </location>
</feature>
<feature type="transmembrane region" description="Helical" evidence="1">
    <location>
        <begin position="132"/>
        <end position="152"/>
    </location>
</feature>
<feature type="transmembrane region" description="Helical" evidence="1">
    <location>
        <begin position="176"/>
        <end position="196"/>
    </location>
</feature>
<feature type="transmembrane region" description="Helical" evidence="1">
    <location>
        <begin position="224"/>
        <end position="244"/>
    </location>
</feature>
<feature type="lipid moiety-binding region" description="N-palmitoyl cysteine" evidence="1">
    <location>
        <position position="19"/>
    </location>
</feature>
<feature type="lipid moiety-binding region" description="S-diacylglycerol cysteine" evidence="1">
    <location>
        <position position="19"/>
    </location>
</feature>
<dbReference type="EMBL" id="CP000029">
    <property type="protein sequence ID" value="AAW52839.1"/>
    <property type="molecule type" value="Genomic_DNA"/>
</dbReference>
<dbReference type="SMR" id="Q5HLG6"/>
<dbReference type="STRING" id="176279.SERP2021"/>
<dbReference type="KEGG" id="ser:SERP2021"/>
<dbReference type="eggNOG" id="COG0706">
    <property type="taxonomic scope" value="Bacteria"/>
</dbReference>
<dbReference type="HOGENOM" id="CLU_036138_5_2_9"/>
<dbReference type="Proteomes" id="UP000000531">
    <property type="component" value="Chromosome"/>
</dbReference>
<dbReference type="GO" id="GO:0005886">
    <property type="term" value="C:plasma membrane"/>
    <property type="evidence" value="ECO:0007669"/>
    <property type="project" value="UniProtKB-SubCell"/>
</dbReference>
<dbReference type="GO" id="GO:0032977">
    <property type="term" value="F:membrane insertase activity"/>
    <property type="evidence" value="ECO:0007669"/>
    <property type="project" value="InterPro"/>
</dbReference>
<dbReference type="GO" id="GO:0051205">
    <property type="term" value="P:protein insertion into membrane"/>
    <property type="evidence" value="ECO:0007669"/>
    <property type="project" value="TreeGrafter"/>
</dbReference>
<dbReference type="GO" id="GO:0015031">
    <property type="term" value="P:protein transport"/>
    <property type="evidence" value="ECO:0007669"/>
    <property type="project" value="UniProtKB-KW"/>
</dbReference>
<dbReference type="CDD" id="cd20070">
    <property type="entry name" value="5TM_YidC_Alb3"/>
    <property type="match status" value="1"/>
</dbReference>
<dbReference type="HAMAP" id="MF_01811">
    <property type="entry name" value="YidC_type2"/>
    <property type="match status" value="1"/>
</dbReference>
<dbReference type="InterPro" id="IPR001708">
    <property type="entry name" value="YidC/ALB3/OXA1/COX18"/>
</dbReference>
<dbReference type="InterPro" id="IPR028055">
    <property type="entry name" value="YidC/Oxa/ALB_C"/>
</dbReference>
<dbReference type="InterPro" id="IPR023060">
    <property type="entry name" value="YidC/YidC1/YidC2_Firmicutes"/>
</dbReference>
<dbReference type="InterPro" id="IPR047196">
    <property type="entry name" value="YidC_ALB_C"/>
</dbReference>
<dbReference type="NCBIfam" id="TIGR03592">
    <property type="entry name" value="yidC_oxa1_cterm"/>
    <property type="match status" value="1"/>
</dbReference>
<dbReference type="PANTHER" id="PTHR12428:SF65">
    <property type="entry name" value="CYTOCHROME C OXIDASE ASSEMBLY PROTEIN COX18, MITOCHONDRIAL"/>
    <property type="match status" value="1"/>
</dbReference>
<dbReference type="PANTHER" id="PTHR12428">
    <property type="entry name" value="OXA1"/>
    <property type="match status" value="1"/>
</dbReference>
<dbReference type="Pfam" id="PF02096">
    <property type="entry name" value="60KD_IMP"/>
    <property type="match status" value="1"/>
</dbReference>
<dbReference type="PRINTS" id="PR00701">
    <property type="entry name" value="60KDINNERMP"/>
</dbReference>
<dbReference type="PROSITE" id="PS51257">
    <property type="entry name" value="PROKAR_LIPOPROTEIN"/>
    <property type="match status" value="1"/>
</dbReference>
<reference key="1">
    <citation type="journal article" date="2005" name="J. Bacteriol.">
        <title>Insights on evolution of virulence and resistance from the complete genome analysis of an early methicillin-resistant Staphylococcus aureus strain and a biofilm-producing methicillin-resistant Staphylococcus epidermidis strain.</title>
        <authorList>
            <person name="Gill S.R."/>
            <person name="Fouts D.E."/>
            <person name="Archer G.L."/>
            <person name="Mongodin E.F."/>
            <person name="DeBoy R.T."/>
            <person name="Ravel J."/>
            <person name="Paulsen I.T."/>
            <person name="Kolonay J.F."/>
            <person name="Brinkac L.M."/>
            <person name="Beanan M.J."/>
            <person name="Dodson R.J."/>
            <person name="Daugherty S.C."/>
            <person name="Madupu R."/>
            <person name="Angiuoli S.V."/>
            <person name="Durkin A.S."/>
            <person name="Haft D.H."/>
            <person name="Vamathevan J.J."/>
            <person name="Khouri H."/>
            <person name="Utterback T.R."/>
            <person name="Lee C."/>
            <person name="Dimitrov G."/>
            <person name="Jiang L."/>
            <person name="Qin H."/>
            <person name="Weidman J."/>
            <person name="Tran K."/>
            <person name="Kang K.H."/>
            <person name="Hance I.R."/>
            <person name="Nelson K.E."/>
            <person name="Fraser C.M."/>
        </authorList>
    </citation>
    <scope>NUCLEOTIDE SEQUENCE [LARGE SCALE GENOMIC DNA]</scope>
    <source>
        <strain>ATCC 35984 / DSM 28319 / BCRC 17069 / CCUG 31568 / BM 3577 / RP62A</strain>
    </source>
</reference>
<proteinExistence type="inferred from homology"/>
<comment type="function">
    <text evidence="1">Required for the insertion and/or proper folding and/or complex formation of integral membrane proteins into the membrane. Involved in integration of membrane proteins that insert both dependently and independently of the Sec translocase complex, as well as at least some lipoproteins.</text>
</comment>
<comment type="subcellular location">
    <subcellularLocation>
        <location evidence="1">Cell membrane</location>
        <topology evidence="1">Multi-pass membrane protein</topology>
    </subcellularLocation>
</comment>
<comment type="similarity">
    <text evidence="1">Belongs to the OXA1/ALB3/YidC family. Type 2 subfamily.</text>
</comment>
<protein>
    <recommendedName>
        <fullName evidence="1">Membrane protein insertase YidC 1</fullName>
    </recommendedName>
    <alternativeName>
        <fullName evidence="1">Foldase YidC 1</fullName>
    </alternativeName>
    <alternativeName>
        <fullName evidence="1">Membrane integrase YidC 1</fullName>
    </alternativeName>
    <alternativeName>
        <fullName evidence="1">Membrane protein YidC 1</fullName>
    </alternativeName>
</protein>
<gene>
    <name evidence="1" type="primary">yidC1</name>
    <name type="ordered locus">SERP2021</name>
</gene>
<sequence length="278" mass="32335">MHKRLFITLLGFIILLAGCDYSKEENQTGIFYNVFVKSMDGFLHFLGRVFQDNYGFAIISIVLIVRFILLPFMLIQVKNMHMMREKTKVVQPELDAIRDKMKHATSQEERNAANQLLMKKYQSYGINPLKNMLGCLPVLIQMPILMGLYMSLKYPSSHGITEYPHFLWFDLTQPDLIMTIIAAIMYFVQPLVNSIHYPKDQRKTYYFMMVFSPIFITYASLHSAAALGLYWSISAAFLIVQMHFAHSHYKKVALHEAKKLKQKLEQNKDNSELLTEES</sequence>
<evidence type="ECO:0000255" key="1">
    <source>
        <dbReference type="HAMAP-Rule" id="MF_01811"/>
    </source>
</evidence>
<accession>Q5HLG6</accession>
<keyword id="KW-1003">Cell membrane</keyword>
<keyword id="KW-0143">Chaperone</keyword>
<keyword id="KW-0449">Lipoprotein</keyword>
<keyword id="KW-0472">Membrane</keyword>
<keyword id="KW-0564">Palmitate</keyword>
<keyword id="KW-0653">Protein transport</keyword>
<keyword id="KW-1185">Reference proteome</keyword>
<keyword id="KW-0732">Signal</keyword>
<keyword id="KW-0812">Transmembrane</keyword>
<keyword id="KW-1133">Transmembrane helix</keyword>
<keyword id="KW-0813">Transport</keyword>